<organism>
    <name type="scientific">Bacillus cereus (strain AH820)</name>
    <dbReference type="NCBI Taxonomy" id="405535"/>
    <lineage>
        <taxon>Bacteria</taxon>
        <taxon>Bacillati</taxon>
        <taxon>Bacillota</taxon>
        <taxon>Bacilli</taxon>
        <taxon>Bacillales</taxon>
        <taxon>Bacillaceae</taxon>
        <taxon>Bacillus</taxon>
        <taxon>Bacillus cereus group</taxon>
    </lineage>
</organism>
<keyword id="KW-0687">Ribonucleoprotein</keyword>
<keyword id="KW-0689">Ribosomal protein</keyword>
<keyword id="KW-0694">RNA-binding</keyword>
<keyword id="KW-0699">rRNA-binding</keyword>
<keyword id="KW-0820">tRNA-binding</keyword>
<feature type="chain" id="PRO_1000125892" description="Small ribosomal subunit protein uS7">
    <location>
        <begin position="1"/>
        <end position="156"/>
    </location>
</feature>
<dbReference type="EMBL" id="CP001283">
    <property type="protein sequence ID" value="ACK91017.1"/>
    <property type="molecule type" value="Genomic_DNA"/>
</dbReference>
<dbReference type="RefSeq" id="WP_001137493.1">
    <property type="nucleotide sequence ID" value="NC_011773.1"/>
</dbReference>
<dbReference type="SMR" id="B7JKB5"/>
<dbReference type="GeneID" id="93010947"/>
<dbReference type="KEGG" id="bcu:BCAH820_0118"/>
<dbReference type="HOGENOM" id="CLU_072226_1_1_9"/>
<dbReference type="Proteomes" id="UP000001363">
    <property type="component" value="Chromosome"/>
</dbReference>
<dbReference type="GO" id="GO:0015935">
    <property type="term" value="C:small ribosomal subunit"/>
    <property type="evidence" value="ECO:0007669"/>
    <property type="project" value="InterPro"/>
</dbReference>
<dbReference type="GO" id="GO:0019843">
    <property type="term" value="F:rRNA binding"/>
    <property type="evidence" value="ECO:0007669"/>
    <property type="project" value="UniProtKB-UniRule"/>
</dbReference>
<dbReference type="GO" id="GO:0003735">
    <property type="term" value="F:structural constituent of ribosome"/>
    <property type="evidence" value="ECO:0007669"/>
    <property type="project" value="InterPro"/>
</dbReference>
<dbReference type="GO" id="GO:0000049">
    <property type="term" value="F:tRNA binding"/>
    <property type="evidence" value="ECO:0007669"/>
    <property type="project" value="UniProtKB-UniRule"/>
</dbReference>
<dbReference type="GO" id="GO:0006412">
    <property type="term" value="P:translation"/>
    <property type="evidence" value="ECO:0007669"/>
    <property type="project" value="UniProtKB-UniRule"/>
</dbReference>
<dbReference type="CDD" id="cd14869">
    <property type="entry name" value="uS7_Bacteria"/>
    <property type="match status" value="1"/>
</dbReference>
<dbReference type="FunFam" id="1.10.455.10:FF:000001">
    <property type="entry name" value="30S ribosomal protein S7"/>
    <property type="match status" value="1"/>
</dbReference>
<dbReference type="Gene3D" id="1.10.455.10">
    <property type="entry name" value="Ribosomal protein S7 domain"/>
    <property type="match status" value="1"/>
</dbReference>
<dbReference type="HAMAP" id="MF_00480_B">
    <property type="entry name" value="Ribosomal_uS7_B"/>
    <property type="match status" value="1"/>
</dbReference>
<dbReference type="InterPro" id="IPR000235">
    <property type="entry name" value="Ribosomal_uS7"/>
</dbReference>
<dbReference type="InterPro" id="IPR005717">
    <property type="entry name" value="Ribosomal_uS7_bac/org-type"/>
</dbReference>
<dbReference type="InterPro" id="IPR020606">
    <property type="entry name" value="Ribosomal_uS7_CS"/>
</dbReference>
<dbReference type="InterPro" id="IPR023798">
    <property type="entry name" value="Ribosomal_uS7_dom"/>
</dbReference>
<dbReference type="InterPro" id="IPR036823">
    <property type="entry name" value="Ribosomal_uS7_dom_sf"/>
</dbReference>
<dbReference type="NCBIfam" id="TIGR01029">
    <property type="entry name" value="rpsG_bact"/>
    <property type="match status" value="1"/>
</dbReference>
<dbReference type="PANTHER" id="PTHR11205">
    <property type="entry name" value="RIBOSOMAL PROTEIN S7"/>
    <property type="match status" value="1"/>
</dbReference>
<dbReference type="Pfam" id="PF00177">
    <property type="entry name" value="Ribosomal_S7"/>
    <property type="match status" value="1"/>
</dbReference>
<dbReference type="PIRSF" id="PIRSF002122">
    <property type="entry name" value="RPS7p_RPS7a_RPS5e_RPS7o"/>
    <property type="match status" value="1"/>
</dbReference>
<dbReference type="SUPFAM" id="SSF47973">
    <property type="entry name" value="Ribosomal protein S7"/>
    <property type="match status" value="1"/>
</dbReference>
<dbReference type="PROSITE" id="PS00052">
    <property type="entry name" value="RIBOSOMAL_S7"/>
    <property type="match status" value="1"/>
</dbReference>
<name>RS7_BACC0</name>
<reference key="1">
    <citation type="submission" date="2008-10" db="EMBL/GenBank/DDBJ databases">
        <title>Genome sequence of Bacillus cereus AH820.</title>
        <authorList>
            <person name="Dodson R.J."/>
            <person name="Durkin A.S."/>
            <person name="Rosovitz M.J."/>
            <person name="Rasko D.A."/>
            <person name="Hoffmaster A."/>
            <person name="Ravel J."/>
            <person name="Sutton G."/>
        </authorList>
    </citation>
    <scope>NUCLEOTIDE SEQUENCE [LARGE SCALE GENOMIC DNA]</scope>
    <source>
        <strain>AH820</strain>
    </source>
</reference>
<accession>B7JKB5</accession>
<gene>
    <name evidence="1" type="primary">rpsG</name>
    <name type="ordered locus">BCAH820_0118</name>
</gene>
<protein>
    <recommendedName>
        <fullName evidence="1">Small ribosomal subunit protein uS7</fullName>
    </recommendedName>
    <alternativeName>
        <fullName evidence="2">30S ribosomal protein S7</fullName>
    </alternativeName>
</protein>
<proteinExistence type="inferred from homology"/>
<evidence type="ECO:0000255" key="1">
    <source>
        <dbReference type="HAMAP-Rule" id="MF_00480"/>
    </source>
</evidence>
<evidence type="ECO:0000305" key="2"/>
<sequence length="156" mass="17884">MPRKGPVAKRDVLPDPMYNSKLVTRLINKMMVDGKKGKSQTILYNAFDIVSERTGKEPMEVFEQALKNIMPVLEVRARRVGGANYQVPVEVRPERRTTLGLRWLVNYARLRGEKTMEERLANEILDAANNAGASVKKREDTHKMAEANKAFAHYRW</sequence>
<comment type="function">
    <text evidence="1">One of the primary rRNA binding proteins, it binds directly to 16S rRNA where it nucleates assembly of the head domain of the 30S subunit. Is located at the subunit interface close to the decoding center, probably blocks exit of the E-site tRNA.</text>
</comment>
<comment type="subunit">
    <text evidence="1">Part of the 30S ribosomal subunit. Contacts proteins S9 and S11.</text>
</comment>
<comment type="similarity">
    <text evidence="1">Belongs to the universal ribosomal protein uS7 family.</text>
</comment>